<sequence length="388" mass="42602">MNQTVDGVAPNKSGPVIEIDHVTKRFADYVAVADADFSIASGEFFSMLGPSGCGKTTTLRMIAGFETPTSGAIRLEGTDVSRVPPHKRNVNTVFQHYALFPHMSVWDNVAYGPRSMKKDKSEVKRRVDELLEVVRLTDFAKRKPGQLSGGQQQRVALARALVNYPSALLLDEPLGALDLKLRHAMQFELKRIQREVGITFIYVTHDQEEALTMSDRIAVMNAGNVEQIGTPTDIYDRPATVFVANFIGQANLWSGRQTGRLNRDYVEIDVLGSKLKARPGDTAIEAGGHATLMVRPERLRVSMEPPVGDVAAVRATVRDMTFQGPVVRLSLVAPDDSPIVAHVGTEQQLPLLRPGDEVYVCWSPDASLVLPAADIPTTEDLEEMLDES</sequence>
<proteinExistence type="inferred from homology"/>
<gene>
    <name evidence="1" type="primary">potA</name>
    <name type="ordered locus">Mmcs_2567</name>
</gene>
<accession>Q1B8V9</accession>
<feature type="chain" id="PRO_0000286252" description="Spermidine/putrescine import ATP-binding protein PotA">
    <location>
        <begin position="1"/>
        <end position="388"/>
    </location>
</feature>
<feature type="domain" description="ABC transporter" evidence="1">
    <location>
        <begin position="17"/>
        <end position="247"/>
    </location>
</feature>
<feature type="binding site" evidence="1">
    <location>
        <begin position="49"/>
        <end position="56"/>
    </location>
    <ligand>
        <name>ATP</name>
        <dbReference type="ChEBI" id="CHEBI:30616"/>
    </ligand>
</feature>
<keyword id="KW-0067">ATP-binding</keyword>
<keyword id="KW-1003">Cell membrane</keyword>
<keyword id="KW-0472">Membrane</keyword>
<keyword id="KW-0547">Nucleotide-binding</keyword>
<keyword id="KW-1278">Translocase</keyword>
<keyword id="KW-0813">Transport</keyword>
<comment type="function">
    <text evidence="1">Part of the ABC transporter complex PotABCD involved in spermidine/putrescine import. Responsible for energy coupling to the transport system.</text>
</comment>
<comment type="catalytic activity">
    <reaction evidence="1">
        <text>ATP + H2O + polyamine-[polyamine-binding protein]Side 1 = ADP + phosphate + polyamineSide 2 + [polyamine-binding protein]Side 1.</text>
        <dbReference type="EC" id="7.6.2.11"/>
    </reaction>
</comment>
<comment type="subunit">
    <text evidence="1">The complex is composed of two ATP-binding proteins (PotA), two transmembrane proteins (PotB and PotC) and a solute-binding protein (PotD).</text>
</comment>
<comment type="subcellular location">
    <subcellularLocation>
        <location evidence="1">Cell membrane</location>
        <topology evidence="1">Peripheral membrane protein</topology>
    </subcellularLocation>
</comment>
<comment type="similarity">
    <text evidence="1">Belongs to the ABC transporter superfamily. Spermidine/putrescine importer (TC 3.A.1.11.1) family.</text>
</comment>
<protein>
    <recommendedName>
        <fullName evidence="1">Spermidine/putrescine import ATP-binding protein PotA</fullName>
        <ecNumber evidence="1">7.6.2.11</ecNumber>
    </recommendedName>
</protein>
<organism>
    <name type="scientific">Mycobacterium sp. (strain MCS)</name>
    <dbReference type="NCBI Taxonomy" id="164756"/>
    <lineage>
        <taxon>Bacteria</taxon>
        <taxon>Bacillati</taxon>
        <taxon>Actinomycetota</taxon>
        <taxon>Actinomycetes</taxon>
        <taxon>Mycobacteriales</taxon>
        <taxon>Mycobacteriaceae</taxon>
        <taxon>Mycobacterium</taxon>
    </lineage>
</organism>
<dbReference type="EC" id="7.6.2.11" evidence="1"/>
<dbReference type="EMBL" id="CP000384">
    <property type="protein sequence ID" value="ABG08675.1"/>
    <property type="molecule type" value="Genomic_DNA"/>
</dbReference>
<dbReference type="SMR" id="Q1B8V9"/>
<dbReference type="KEGG" id="mmc:Mmcs_2567"/>
<dbReference type="HOGENOM" id="CLU_000604_1_1_11"/>
<dbReference type="BioCyc" id="MSP164756:G1G6O-2618-MONOMER"/>
<dbReference type="GO" id="GO:0043190">
    <property type="term" value="C:ATP-binding cassette (ABC) transporter complex"/>
    <property type="evidence" value="ECO:0007669"/>
    <property type="project" value="InterPro"/>
</dbReference>
<dbReference type="GO" id="GO:0015594">
    <property type="term" value="F:ABC-type putrescine transporter activity"/>
    <property type="evidence" value="ECO:0007669"/>
    <property type="project" value="InterPro"/>
</dbReference>
<dbReference type="GO" id="GO:0005524">
    <property type="term" value="F:ATP binding"/>
    <property type="evidence" value="ECO:0007669"/>
    <property type="project" value="UniProtKB-KW"/>
</dbReference>
<dbReference type="GO" id="GO:0016887">
    <property type="term" value="F:ATP hydrolysis activity"/>
    <property type="evidence" value="ECO:0007669"/>
    <property type="project" value="InterPro"/>
</dbReference>
<dbReference type="CDD" id="cd03300">
    <property type="entry name" value="ABC_PotA_N"/>
    <property type="match status" value="1"/>
</dbReference>
<dbReference type="FunFam" id="3.40.50.300:FF:000133">
    <property type="entry name" value="Spermidine/putrescine import ATP-binding protein PotA"/>
    <property type="match status" value="1"/>
</dbReference>
<dbReference type="Gene3D" id="2.40.50.100">
    <property type="match status" value="1"/>
</dbReference>
<dbReference type="Gene3D" id="3.40.50.300">
    <property type="entry name" value="P-loop containing nucleotide triphosphate hydrolases"/>
    <property type="match status" value="1"/>
</dbReference>
<dbReference type="InterPro" id="IPR003593">
    <property type="entry name" value="AAA+_ATPase"/>
</dbReference>
<dbReference type="InterPro" id="IPR050093">
    <property type="entry name" value="ABC_SmlMolc_Importer"/>
</dbReference>
<dbReference type="InterPro" id="IPR003439">
    <property type="entry name" value="ABC_transporter-like_ATP-bd"/>
</dbReference>
<dbReference type="InterPro" id="IPR017871">
    <property type="entry name" value="ABC_transporter-like_CS"/>
</dbReference>
<dbReference type="InterPro" id="IPR008995">
    <property type="entry name" value="Mo/tungstate-bd_C_term_dom"/>
</dbReference>
<dbReference type="InterPro" id="IPR027417">
    <property type="entry name" value="P-loop_NTPase"/>
</dbReference>
<dbReference type="InterPro" id="IPR005893">
    <property type="entry name" value="PotA-like"/>
</dbReference>
<dbReference type="InterPro" id="IPR017879">
    <property type="entry name" value="PotA_ATP-bd"/>
</dbReference>
<dbReference type="InterPro" id="IPR013611">
    <property type="entry name" value="Transp-assoc_OB_typ2"/>
</dbReference>
<dbReference type="NCBIfam" id="TIGR01187">
    <property type="entry name" value="potA"/>
    <property type="match status" value="1"/>
</dbReference>
<dbReference type="PANTHER" id="PTHR42781">
    <property type="entry name" value="SPERMIDINE/PUTRESCINE IMPORT ATP-BINDING PROTEIN POTA"/>
    <property type="match status" value="1"/>
</dbReference>
<dbReference type="PANTHER" id="PTHR42781:SF4">
    <property type="entry name" value="SPERMIDINE_PUTRESCINE IMPORT ATP-BINDING PROTEIN POTA"/>
    <property type="match status" value="1"/>
</dbReference>
<dbReference type="Pfam" id="PF00005">
    <property type="entry name" value="ABC_tran"/>
    <property type="match status" value="1"/>
</dbReference>
<dbReference type="Pfam" id="PF08402">
    <property type="entry name" value="TOBE_2"/>
    <property type="match status" value="1"/>
</dbReference>
<dbReference type="SMART" id="SM00382">
    <property type="entry name" value="AAA"/>
    <property type="match status" value="1"/>
</dbReference>
<dbReference type="SUPFAM" id="SSF50331">
    <property type="entry name" value="MOP-like"/>
    <property type="match status" value="1"/>
</dbReference>
<dbReference type="SUPFAM" id="SSF52540">
    <property type="entry name" value="P-loop containing nucleoside triphosphate hydrolases"/>
    <property type="match status" value="1"/>
</dbReference>
<dbReference type="PROSITE" id="PS00211">
    <property type="entry name" value="ABC_TRANSPORTER_1"/>
    <property type="match status" value="1"/>
</dbReference>
<dbReference type="PROSITE" id="PS50893">
    <property type="entry name" value="ABC_TRANSPORTER_2"/>
    <property type="match status" value="1"/>
</dbReference>
<dbReference type="PROSITE" id="PS51305">
    <property type="entry name" value="POTA"/>
    <property type="match status" value="1"/>
</dbReference>
<name>POTA_MYCSS</name>
<reference key="1">
    <citation type="submission" date="2006-06" db="EMBL/GenBank/DDBJ databases">
        <title>Complete sequence of chromosome of Mycobacterium sp. MCS.</title>
        <authorList>
            <consortium name="US DOE Joint Genome Institute"/>
            <person name="Copeland A."/>
            <person name="Lucas S."/>
            <person name="Lapidus A."/>
            <person name="Barry K."/>
            <person name="Detter J.C."/>
            <person name="Glavina del Rio T."/>
            <person name="Hammon N."/>
            <person name="Israni S."/>
            <person name="Dalin E."/>
            <person name="Tice H."/>
            <person name="Pitluck S."/>
            <person name="Martinez M."/>
            <person name="Schmutz J."/>
            <person name="Larimer F."/>
            <person name="Land M."/>
            <person name="Hauser L."/>
            <person name="Kyrpides N."/>
            <person name="Kim E."/>
            <person name="Miller C.D."/>
            <person name="Hughes J.E."/>
            <person name="Anderson A.J."/>
            <person name="Sims R.C."/>
            <person name="Richardson P."/>
        </authorList>
    </citation>
    <scope>NUCLEOTIDE SEQUENCE [LARGE SCALE GENOMIC DNA]</scope>
    <source>
        <strain>MCS</strain>
    </source>
</reference>
<evidence type="ECO:0000255" key="1">
    <source>
        <dbReference type="HAMAP-Rule" id="MF_01726"/>
    </source>
</evidence>